<organism>
    <name type="scientific">Corynebacterium diphtheriae (strain ATCC 700971 / NCTC 13129 / Biotype gravis)</name>
    <dbReference type="NCBI Taxonomy" id="257309"/>
    <lineage>
        <taxon>Bacteria</taxon>
        <taxon>Bacillati</taxon>
        <taxon>Actinomycetota</taxon>
        <taxon>Actinomycetes</taxon>
        <taxon>Mycobacteriales</taxon>
        <taxon>Corynebacteriaceae</taxon>
        <taxon>Corynebacterium</taxon>
    </lineage>
</organism>
<accession>Q6NI09</accession>
<sequence length="293" mass="31202">MRDLIGFKAVAVHAHPDDEAIWTGGLLANLAARGADVTVVTCTLGEEGEVIGEPYQGLTNKNADQLGGFRIHELHKSLSLLGVRGEFLGGAGCWRDSGMIGDPANEHPRAFISSGDKSIEQLTEIFERLQPDLVITYGPDGGYGHPDHIRAHNITHTVAENMDIPRILWAVTPRTELEQGMAAITTLPSGWRRALPGEVACVDHVDLTIALDDHAFAAKAAAMRAHATQLWLADATISDVNPHAAIAGVADPKAAPLVFALSNLIAQPLLDIECYQLGGGTPLTSNDPTEGIR</sequence>
<name>MSHB_CORDI</name>
<reference key="1">
    <citation type="journal article" date="2003" name="Nucleic Acids Res.">
        <title>The complete genome sequence and analysis of Corynebacterium diphtheriae NCTC13129.</title>
        <authorList>
            <person name="Cerdeno-Tarraga A.-M."/>
            <person name="Efstratiou A."/>
            <person name="Dover L.G."/>
            <person name="Holden M.T.G."/>
            <person name="Pallen M.J."/>
            <person name="Bentley S.D."/>
            <person name="Besra G.S."/>
            <person name="Churcher C.M."/>
            <person name="James K.D."/>
            <person name="De Zoysa A."/>
            <person name="Chillingworth T."/>
            <person name="Cronin A."/>
            <person name="Dowd L."/>
            <person name="Feltwell T."/>
            <person name="Hamlin N."/>
            <person name="Holroyd S."/>
            <person name="Jagels K."/>
            <person name="Moule S."/>
            <person name="Quail M.A."/>
            <person name="Rabbinowitsch E."/>
            <person name="Rutherford K.M."/>
            <person name="Thomson N.R."/>
            <person name="Unwin L."/>
            <person name="Whitehead S."/>
            <person name="Barrell B.G."/>
            <person name="Parkhill J."/>
        </authorList>
    </citation>
    <scope>NUCLEOTIDE SEQUENCE [LARGE SCALE GENOMIC DNA]</scope>
    <source>
        <strain>ATCC 700971 / NCTC 13129 / Biotype gravis</strain>
    </source>
</reference>
<comment type="function">
    <text evidence="1">Catalyzes the deacetylation of 1D-myo-inositol 2-acetamido-2-deoxy-alpha-D-glucopyranoside (GlcNAc-Ins) in the mycothiol biosynthesis pathway.</text>
</comment>
<comment type="catalytic activity">
    <reaction evidence="1">
        <text>1D-myo-inositol 2-acetamido-2-deoxy-alpha-D-glucopyranoside + H2O = 1D-myo-inositol 2-amino-2-deoxy-alpha-D-glucopyranoside + acetate</text>
        <dbReference type="Rhea" id="RHEA:26180"/>
        <dbReference type="ChEBI" id="CHEBI:15377"/>
        <dbReference type="ChEBI" id="CHEBI:30089"/>
        <dbReference type="ChEBI" id="CHEBI:52442"/>
        <dbReference type="ChEBI" id="CHEBI:58886"/>
        <dbReference type="EC" id="3.5.1.103"/>
    </reaction>
</comment>
<comment type="cofactor">
    <cofactor evidence="1">
        <name>Zn(2+)</name>
        <dbReference type="ChEBI" id="CHEBI:29105"/>
    </cofactor>
    <text evidence="1">Binds 1 zinc ion per subunit.</text>
</comment>
<comment type="similarity">
    <text evidence="1">Belongs to the MshB deacetylase family.</text>
</comment>
<feature type="chain" id="PRO_0000400176" description="1D-myo-inositol 2-acetamido-2-deoxy-alpha-D-glucopyranoside deacetylase">
    <location>
        <begin position="1"/>
        <end position="293"/>
    </location>
</feature>
<feature type="binding site" evidence="1">
    <location>
        <position position="15"/>
    </location>
    <ligand>
        <name>Zn(2+)</name>
        <dbReference type="ChEBI" id="CHEBI:29105"/>
    </ligand>
</feature>
<feature type="binding site" evidence="1">
    <location>
        <position position="18"/>
    </location>
    <ligand>
        <name>Zn(2+)</name>
        <dbReference type="ChEBI" id="CHEBI:29105"/>
    </ligand>
</feature>
<feature type="binding site" evidence="1">
    <location>
        <position position="148"/>
    </location>
    <ligand>
        <name>Zn(2+)</name>
        <dbReference type="ChEBI" id="CHEBI:29105"/>
    </ligand>
</feature>
<evidence type="ECO:0000255" key="1">
    <source>
        <dbReference type="HAMAP-Rule" id="MF_01696"/>
    </source>
</evidence>
<protein>
    <recommendedName>
        <fullName evidence="1">1D-myo-inositol 2-acetamido-2-deoxy-alpha-D-glucopyranoside deacetylase</fullName>
        <shortName evidence="1">GlcNAc-Ins deacetylase</shortName>
        <ecNumber evidence="1">3.5.1.103</ecNumber>
    </recommendedName>
    <alternativeName>
        <fullName>N-acetyl-1-D-myo-inositol 2-amino-2-deoxy-alpha-D-glucopyranoside deacetylase</fullName>
    </alternativeName>
</protein>
<proteinExistence type="inferred from homology"/>
<gene>
    <name evidence="1" type="primary">mshB</name>
    <name type="ordered locus">DIP0971</name>
</gene>
<keyword id="KW-0378">Hydrolase</keyword>
<keyword id="KW-0479">Metal-binding</keyword>
<keyword id="KW-1185">Reference proteome</keyword>
<keyword id="KW-0862">Zinc</keyword>
<dbReference type="EC" id="3.5.1.103" evidence="1"/>
<dbReference type="EMBL" id="BX248356">
    <property type="protein sequence ID" value="CAE49489.1"/>
    <property type="molecule type" value="Genomic_DNA"/>
</dbReference>
<dbReference type="RefSeq" id="WP_010934705.1">
    <property type="nucleotide sequence ID" value="NC_002935.2"/>
</dbReference>
<dbReference type="SMR" id="Q6NI09"/>
<dbReference type="STRING" id="257309.DIP0971"/>
<dbReference type="GeneID" id="29423117"/>
<dbReference type="KEGG" id="cdi:DIP0971"/>
<dbReference type="HOGENOM" id="CLU_049311_2_1_11"/>
<dbReference type="Proteomes" id="UP000002198">
    <property type="component" value="Chromosome"/>
</dbReference>
<dbReference type="GO" id="GO:0035595">
    <property type="term" value="F:N-acetylglucosaminylinositol deacetylase activity"/>
    <property type="evidence" value="ECO:0007669"/>
    <property type="project" value="UniProtKB-EC"/>
</dbReference>
<dbReference type="GO" id="GO:0008270">
    <property type="term" value="F:zinc ion binding"/>
    <property type="evidence" value="ECO:0007669"/>
    <property type="project" value="UniProtKB-UniRule"/>
</dbReference>
<dbReference type="GO" id="GO:0010125">
    <property type="term" value="P:mycothiol biosynthetic process"/>
    <property type="evidence" value="ECO:0007669"/>
    <property type="project" value="UniProtKB-UniRule"/>
</dbReference>
<dbReference type="Gene3D" id="3.40.50.10320">
    <property type="entry name" value="LmbE-like"/>
    <property type="match status" value="1"/>
</dbReference>
<dbReference type="HAMAP" id="MF_01696">
    <property type="entry name" value="MshB"/>
    <property type="match status" value="1"/>
</dbReference>
<dbReference type="InterPro" id="IPR003737">
    <property type="entry name" value="GlcNAc_PI_deacetylase-related"/>
</dbReference>
<dbReference type="InterPro" id="IPR024078">
    <property type="entry name" value="LmbE-like_dom_sf"/>
</dbReference>
<dbReference type="InterPro" id="IPR017810">
    <property type="entry name" value="Mycothiol_biosynthesis_MshB"/>
</dbReference>
<dbReference type="NCBIfam" id="TIGR03445">
    <property type="entry name" value="mycothiol_MshB"/>
    <property type="match status" value="1"/>
</dbReference>
<dbReference type="PANTHER" id="PTHR12993:SF26">
    <property type="entry name" value="1D-MYO-INOSITOL 2-ACETAMIDO-2-DEOXY-ALPHA-D-GLUCOPYRANOSIDE DEACETYLASE"/>
    <property type="match status" value="1"/>
</dbReference>
<dbReference type="PANTHER" id="PTHR12993">
    <property type="entry name" value="N-ACETYLGLUCOSAMINYL-PHOSPHATIDYLINOSITOL DE-N-ACETYLASE-RELATED"/>
    <property type="match status" value="1"/>
</dbReference>
<dbReference type="Pfam" id="PF02585">
    <property type="entry name" value="PIG-L"/>
    <property type="match status" value="1"/>
</dbReference>
<dbReference type="SUPFAM" id="SSF102588">
    <property type="entry name" value="LmbE-like"/>
    <property type="match status" value="1"/>
</dbReference>